<comment type="function">
    <text evidence="4 5">Involved in high-affinity nitrate transport. Controls nitrate content in seeds.</text>
</comment>
<comment type="subcellular location">
    <subcellularLocation>
        <location evidence="5">Vacuole membrane</location>
        <topology evidence="5">Multi-pass membrane protein</topology>
    </subcellularLocation>
</comment>
<comment type="tissue specificity">
    <text evidence="3 5">Expressed in seeds, leaves and shoots. Lower expression in roots.</text>
</comment>
<comment type="developmental stage">
    <text evidence="5">Expressed mainly at the end of seed maturation when the tissue is completely dry.</text>
</comment>
<comment type="induction">
    <text evidence="3 4 5">Not induced by nitrate or by growth on low nitrate concentration. Down-regulated by imbibition.</text>
</comment>
<comment type="disruption phenotype">
    <text evidence="5">No visible phenotype during vegetative growth. No effect on root nitrate influx. Decreased nitrate content in mature seeds and delayed germination.</text>
</comment>
<comment type="similarity">
    <text evidence="6">Belongs to the major facilitator superfamily. Nitrate/nitrite porter (TC 2.A.1.8) family.</text>
</comment>
<evidence type="ECO:0000255" key="1"/>
<evidence type="ECO:0000256" key="2">
    <source>
        <dbReference type="SAM" id="MobiDB-lite"/>
    </source>
</evidence>
<evidence type="ECO:0000269" key="3">
    <source>
    </source>
</evidence>
<evidence type="ECO:0000269" key="4">
    <source>
    </source>
</evidence>
<evidence type="ECO:0000269" key="5">
    <source>
    </source>
</evidence>
<evidence type="ECO:0000305" key="6"/>
<proteinExistence type="evidence at transcript level"/>
<gene>
    <name type="primary">NRT2.7</name>
    <name type="ordered locus">At5g14570</name>
    <name type="ORF">T15N1.60</name>
</gene>
<dbReference type="EMBL" id="AL163792">
    <property type="protein sequence ID" value="CAB87624.1"/>
    <property type="molecule type" value="Genomic_DNA"/>
</dbReference>
<dbReference type="EMBL" id="CP002688">
    <property type="protein sequence ID" value="AED92049.1"/>
    <property type="molecule type" value="Genomic_DNA"/>
</dbReference>
<dbReference type="EMBL" id="AY035065">
    <property type="protein sequence ID" value="AAK59570.1"/>
    <property type="molecule type" value="mRNA"/>
</dbReference>
<dbReference type="EMBL" id="AY056363">
    <property type="protein sequence ID" value="AAL07249.1"/>
    <property type="molecule type" value="mRNA"/>
</dbReference>
<dbReference type="PIR" id="T48630">
    <property type="entry name" value="T48630"/>
</dbReference>
<dbReference type="RefSeq" id="NP_196961.1">
    <property type="nucleotide sequence ID" value="NM_121461.3"/>
</dbReference>
<dbReference type="BioGRID" id="16585">
    <property type="interactions" value="2"/>
</dbReference>
<dbReference type="FunCoup" id="Q9LYK2">
    <property type="interactions" value="488"/>
</dbReference>
<dbReference type="IntAct" id="Q9LYK2">
    <property type="interactions" value="3"/>
</dbReference>
<dbReference type="STRING" id="3702.Q9LYK2"/>
<dbReference type="PaxDb" id="3702-AT5G14570.1"/>
<dbReference type="ProteomicsDB" id="250478"/>
<dbReference type="EnsemblPlants" id="AT5G14570.1">
    <property type="protein sequence ID" value="AT5G14570.1"/>
    <property type="gene ID" value="AT5G14570"/>
</dbReference>
<dbReference type="GeneID" id="831308"/>
<dbReference type="Gramene" id="AT5G14570.1">
    <property type="protein sequence ID" value="AT5G14570.1"/>
    <property type="gene ID" value="AT5G14570"/>
</dbReference>
<dbReference type="KEGG" id="ath:AT5G14570"/>
<dbReference type="Araport" id="AT5G14570"/>
<dbReference type="TAIR" id="AT5G14570">
    <property type="gene designation" value="NRT2.7"/>
</dbReference>
<dbReference type="eggNOG" id="ENOG502QPIC">
    <property type="taxonomic scope" value="Eukaryota"/>
</dbReference>
<dbReference type="HOGENOM" id="CLU_024204_0_0_1"/>
<dbReference type="InParanoid" id="Q9LYK2"/>
<dbReference type="OMA" id="VVWFSHA"/>
<dbReference type="OrthoDB" id="434240at2759"/>
<dbReference type="PhylomeDB" id="Q9LYK2"/>
<dbReference type="PRO" id="PR:Q9LYK2"/>
<dbReference type="Proteomes" id="UP000006548">
    <property type="component" value="Chromosome 5"/>
</dbReference>
<dbReference type="ExpressionAtlas" id="Q9LYK2">
    <property type="expression patterns" value="baseline and differential"/>
</dbReference>
<dbReference type="GO" id="GO:0009705">
    <property type="term" value="C:plant-type vacuole membrane"/>
    <property type="evidence" value="ECO:0000314"/>
    <property type="project" value="TAIR"/>
</dbReference>
<dbReference type="GO" id="GO:0015112">
    <property type="term" value="F:nitrate transmembrane transporter activity"/>
    <property type="evidence" value="ECO:0000314"/>
    <property type="project" value="TAIR"/>
</dbReference>
<dbReference type="GO" id="GO:0042128">
    <property type="term" value="P:nitrate assimilation"/>
    <property type="evidence" value="ECO:0007669"/>
    <property type="project" value="UniProtKB-KW"/>
</dbReference>
<dbReference type="GO" id="GO:0015706">
    <property type="term" value="P:nitrate transmembrane transport"/>
    <property type="evidence" value="ECO:0000314"/>
    <property type="project" value="TAIR"/>
</dbReference>
<dbReference type="CDD" id="cd17341">
    <property type="entry name" value="MFS_NRT2_like"/>
    <property type="match status" value="1"/>
</dbReference>
<dbReference type="FunFam" id="1.20.1250.20:FF:000198">
    <property type="entry name" value="High affinity nitrate transporter 2.5"/>
    <property type="match status" value="1"/>
</dbReference>
<dbReference type="FunFam" id="1.20.1250.20:FF:000053">
    <property type="entry name" value="Nitrate transporter 2.1"/>
    <property type="match status" value="1"/>
</dbReference>
<dbReference type="Gene3D" id="1.20.1250.20">
    <property type="entry name" value="MFS general substrate transporter like domains"/>
    <property type="match status" value="2"/>
</dbReference>
<dbReference type="InterPro" id="IPR011701">
    <property type="entry name" value="MFS"/>
</dbReference>
<dbReference type="InterPro" id="IPR020846">
    <property type="entry name" value="MFS_dom"/>
</dbReference>
<dbReference type="InterPro" id="IPR036259">
    <property type="entry name" value="MFS_trans_sf"/>
</dbReference>
<dbReference type="InterPro" id="IPR044772">
    <property type="entry name" value="NO3_transporter"/>
</dbReference>
<dbReference type="PANTHER" id="PTHR23515">
    <property type="entry name" value="HIGH-AFFINITY NITRATE TRANSPORTER 2.3"/>
    <property type="match status" value="1"/>
</dbReference>
<dbReference type="Pfam" id="PF07690">
    <property type="entry name" value="MFS_1"/>
    <property type="match status" value="1"/>
</dbReference>
<dbReference type="SUPFAM" id="SSF103473">
    <property type="entry name" value="MFS general substrate transporter"/>
    <property type="match status" value="1"/>
</dbReference>
<dbReference type="PROSITE" id="PS50850">
    <property type="entry name" value="MFS"/>
    <property type="match status" value="1"/>
</dbReference>
<organism>
    <name type="scientific">Arabidopsis thaliana</name>
    <name type="common">Mouse-ear cress</name>
    <dbReference type="NCBI Taxonomy" id="3702"/>
    <lineage>
        <taxon>Eukaryota</taxon>
        <taxon>Viridiplantae</taxon>
        <taxon>Streptophyta</taxon>
        <taxon>Embryophyta</taxon>
        <taxon>Tracheophyta</taxon>
        <taxon>Spermatophyta</taxon>
        <taxon>Magnoliopsida</taxon>
        <taxon>eudicotyledons</taxon>
        <taxon>Gunneridae</taxon>
        <taxon>Pentapetalae</taxon>
        <taxon>rosids</taxon>
        <taxon>malvids</taxon>
        <taxon>Brassicales</taxon>
        <taxon>Brassicaceae</taxon>
        <taxon>Camelineae</taxon>
        <taxon>Arabidopsis</taxon>
    </lineage>
</organism>
<keyword id="KW-0472">Membrane</keyword>
<keyword id="KW-0534">Nitrate assimilation</keyword>
<keyword id="KW-1185">Reference proteome</keyword>
<keyword id="KW-0812">Transmembrane</keyword>
<keyword id="KW-1133">Transmembrane helix</keyword>
<keyword id="KW-0926">Vacuole</keyword>
<reference key="1">
    <citation type="journal article" date="2000" name="Nature">
        <title>Sequence and analysis of chromosome 5 of the plant Arabidopsis thaliana.</title>
        <authorList>
            <person name="Tabata S."/>
            <person name="Kaneko T."/>
            <person name="Nakamura Y."/>
            <person name="Kotani H."/>
            <person name="Kato T."/>
            <person name="Asamizu E."/>
            <person name="Miyajima N."/>
            <person name="Sasamoto S."/>
            <person name="Kimura T."/>
            <person name="Hosouchi T."/>
            <person name="Kawashima K."/>
            <person name="Kohara M."/>
            <person name="Matsumoto M."/>
            <person name="Matsuno A."/>
            <person name="Muraki A."/>
            <person name="Nakayama S."/>
            <person name="Nakazaki N."/>
            <person name="Naruo K."/>
            <person name="Okumura S."/>
            <person name="Shinpo S."/>
            <person name="Takeuchi C."/>
            <person name="Wada T."/>
            <person name="Watanabe A."/>
            <person name="Yamada M."/>
            <person name="Yasuda M."/>
            <person name="Sato S."/>
            <person name="de la Bastide M."/>
            <person name="Huang E."/>
            <person name="Spiegel L."/>
            <person name="Gnoj L."/>
            <person name="O'Shaughnessy A."/>
            <person name="Preston R."/>
            <person name="Habermann K."/>
            <person name="Murray J."/>
            <person name="Johnson D."/>
            <person name="Rohlfing T."/>
            <person name="Nelson J."/>
            <person name="Stoneking T."/>
            <person name="Pepin K."/>
            <person name="Spieth J."/>
            <person name="Sekhon M."/>
            <person name="Armstrong J."/>
            <person name="Becker M."/>
            <person name="Belter E."/>
            <person name="Cordum H."/>
            <person name="Cordes M."/>
            <person name="Courtney L."/>
            <person name="Courtney W."/>
            <person name="Dante M."/>
            <person name="Du H."/>
            <person name="Edwards J."/>
            <person name="Fryman J."/>
            <person name="Haakensen B."/>
            <person name="Lamar E."/>
            <person name="Latreille P."/>
            <person name="Leonard S."/>
            <person name="Meyer R."/>
            <person name="Mulvaney E."/>
            <person name="Ozersky P."/>
            <person name="Riley A."/>
            <person name="Strowmatt C."/>
            <person name="Wagner-McPherson C."/>
            <person name="Wollam A."/>
            <person name="Yoakum M."/>
            <person name="Bell M."/>
            <person name="Dedhia N."/>
            <person name="Parnell L."/>
            <person name="Shah R."/>
            <person name="Rodriguez M."/>
            <person name="Hoon See L."/>
            <person name="Vil D."/>
            <person name="Baker J."/>
            <person name="Kirchoff K."/>
            <person name="Toth K."/>
            <person name="King L."/>
            <person name="Bahret A."/>
            <person name="Miller B."/>
            <person name="Marra M.A."/>
            <person name="Martienssen R."/>
            <person name="McCombie W.R."/>
            <person name="Wilson R.K."/>
            <person name="Murphy G."/>
            <person name="Bancroft I."/>
            <person name="Volckaert G."/>
            <person name="Wambutt R."/>
            <person name="Duesterhoeft A."/>
            <person name="Stiekema W."/>
            <person name="Pohl T."/>
            <person name="Entian K.-D."/>
            <person name="Terryn N."/>
            <person name="Hartley N."/>
            <person name="Bent E."/>
            <person name="Johnson S."/>
            <person name="Langham S.-A."/>
            <person name="McCullagh B."/>
            <person name="Robben J."/>
            <person name="Grymonprez B."/>
            <person name="Zimmermann W."/>
            <person name="Ramsperger U."/>
            <person name="Wedler H."/>
            <person name="Balke K."/>
            <person name="Wedler E."/>
            <person name="Peters S."/>
            <person name="van Staveren M."/>
            <person name="Dirkse W."/>
            <person name="Mooijman P."/>
            <person name="Klein Lankhorst R."/>
            <person name="Weitzenegger T."/>
            <person name="Bothe G."/>
            <person name="Rose M."/>
            <person name="Hauf J."/>
            <person name="Berneiser S."/>
            <person name="Hempel S."/>
            <person name="Feldpausch M."/>
            <person name="Lamberth S."/>
            <person name="Villarroel R."/>
            <person name="Gielen J."/>
            <person name="Ardiles W."/>
            <person name="Bents O."/>
            <person name="Lemcke K."/>
            <person name="Kolesov G."/>
            <person name="Mayer K.F.X."/>
            <person name="Rudd S."/>
            <person name="Schoof H."/>
            <person name="Schueller C."/>
            <person name="Zaccaria P."/>
            <person name="Mewes H.-W."/>
            <person name="Bevan M."/>
            <person name="Fransz P.F."/>
        </authorList>
    </citation>
    <scope>NUCLEOTIDE SEQUENCE [LARGE SCALE GENOMIC DNA]</scope>
    <source>
        <strain>cv. Columbia</strain>
    </source>
</reference>
<reference key="2">
    <citation type="journal article" date="2017" name="Plant J.">
        <title>Araport11: a complete reannotation of the Arabidopsis thaliana reference genome.</title>
        <authorList>
            <person name="Cheng C.Y."/>
            <person name="Krishnakumar V."/>
            <person name="Chan A.P."/>
            <person name="Thibaud-Nissen F."/>
            <person name="Schobel S."/>
            <person name="Town C.D."/>
        </authorList>
    </citation>
    <scope>GENOME REANNOTATION</scope>
    <source>
        <strain>cv. Columbia</strain>
    </source>
</reference>
<reference key="3">
    <citation type="journal article" date="2003" name="Science">
        <title>Empirical analysis of transcriptional activity in the Arabidopsis genome.</title>
        <authorList>
            <person name="Yamada K."/>
            <person name="Lim J."/>
            <person name="Dale J.M."/>
            <person name="Chen H."/>
            <person name="Shinn P."/>
            <person name="Palm C.J."/>
            <person name="Southwick A.M."/>
            <person name="Wu H.C."/>
            <person name="Kim C.J."/>
            <person name="Nguyen M."/>
            <person name="Pham P.K."/>
            <person name="Cheuk R.F."/>
            <person name="Karlin-Newmann G."/>
            <person name="Liu S.X."/>
            <person name="Lam B."/>
            <person name="Sakano H."/>
            <person name="Wu T."/>
            <person name="Yu G."/>
            <person name="Miranda M."/>
            <person name="Quach H.L."/>
            <person name="Tripp M."/>
            <person name="Chang C.H."/>
            <person name="Lee J.M."/>
            <person name="Toriumi M.J."/>
            <person name="Chan M.M."/>
            <person name="Tang C.C."/>
            <person name="Onodera C.S."/>
            <person name="Deng J.M."/>
            <person name="Akiyama K."/>
            <person name="Ansari Y."/>
            <person name="Arakawa T."/>
            <person name="Banh J."/>
            <person name="Banno F."/>
            <person name="Bowser L."/>
            <person name="Brooks S.Y."/>
            <person name="Carninci P."/>
            <person name="Chao Q."/>
            <person name="Choy N."/>
            <person name="Enju A."/>
            <person name="Goldsmith A.D."/>
            <person name="Gurjal M."/>
            <person name="Hansen N.F."/>
            <person name="Hayashizaki Y."/>
            <person name="Johnson-Hopson C."/>
            <person name="Hsuan V.W."/>
            <person name="Iida K."/>
            <person name="Karnes M."/>
            <person name="Khan S."/>
            <person name="Koesema E."/>
            <person name="Ishida J."/>
            <person name="Jiang P.X."/>
            <person name="Jones T."/>
            <person name="Kawai J."/>
            <person name="Kamiya A."/>
            <person name="Meyers C."/>
            <person name="Nakajima M."/>
            <person name="Narusaka M."/>
            <person name="Seki M."/>
            <person name="Sakurai T."/>
            <person name="Satou M."/>
            <person name="Tamse R."/>
            <person name="Vaysberg M."/>
            <person name="Wallender E.K."/>
            <person name="Wong C."/>
            <person name="Yamamura Y."/>
            <person name="Yuan S."/>
            <person name="Shinozaki K."/>
            <person name="Davis R.W."/>
            <person name="Theologis A."/>
            <person name="Ecker J.R."/>
        </authorList>
    </citation>
    <scope>NUCLEOTIDE SEQUENCE [LARGE SCALE MRNA]</scope>
    <source>
        <strain>cv. Columbia</strain>
    </source>
</reference>
<reference key="4">
    <citation type="journal article" date="2002" name="J. Exp. Bot.">
        <title>Nitrate transport in plants: which gene and which control?</title>
        <authorList>
            <person name="Orsel M."/>
            <person name="Filleur S."/>
            <person name="Fraisier V."/>
            <person name="Daniel-Vedele F."/>
        </authorList>
    </citation>
    <scope>GENE FAMILY</scope>
</reference>
<reference key="5">
    <citation type="journal article" date="2003" name="Plant Cell Physiol.">
        <title>Regulation of NRT1 and NRT2 gene families of Arabidopsis thaliana: responses to nitrate provision.</title>
        <authorList>
            <person name="Okamoto M."/>
            <person name="Vidmar J.J."/>
            <person name="Glass A.D."/>
        </authorList>
    </citation>
    <scope>TISSUE SPECIFICITY</scope>
    <scope>INDUCTION BY NITRATE</scope>
    <scope>GENE FAMILY</scope>
</reference>
<reference key="6">
    <citation type="journal article" date="2004" name="Planta">
        <title>Disruption of the nitrate transporter genes AtNRT2.1 and AtNRT2.2 restricts growth at low external nitrate concentration.</title>
        <authorList>
            <person name="Orsel M."/>
            <person name="Eulenburg K."/>
            <person name="Krapp A."/>
            <person name="Daniel-Vedele F."/>
        </authorList>
    </citation>
    <scope>FUNCTION</scope>
    <scope>INDUCTION BY NITRATE</scope>
</reference>
<reference key="7">
    <citation type="journal article" date="2007" name="FEBS Lett.">
        <title>Nitrate transporters and peptide transporters.</title>
        <authorList>
            <person name="Tsay Y.F."/>
            <person name="Chiu C.C."/>
            <person name="Tsai C.B."/>
            <person name="Ho C.H."/>
            <person name="Hsu P.K."/>
        </authorList>
    </citation>
    <scope>GENE FAMILY</scope>
</reference>
<reference key="8">
    <citation type="journal article" date="2007" name="Plant Cell">
        <title>The Arabidopsis ATNRT2.7 nitrate transporter controls nitrate content in seeds.</title>
        <authorList>
            <person name="Chopin F."/>
            <person name="Orsel M."/>
            <person name="Dorbe M.F."/>
            <person name="Chardon F."/>
            <person name="Truong H.N."/>
            <person name="Miller A.J."/>
            <person name="Krapp A."/>
            <person name="Daniel-Vedele F."/>
        </authorList>
    </citation>
    <scope>FUNCTION</scope>
    <scope>TISSUE SPECIFICITY</scope>
    <scope>DEVELOPMENTAL STAGE</scope>
    <scope>INDUCTION BY IMBIBITION</scope>
    <scope>SUBCELLULAR LOCATION</scope>
    <scope>DISRUPTION PHENOTYPE</scope>
</reference>
<accession>Q9LYK2</accession>
<feature type="chain" id="PRO_0000400104" description="High affinity nitrate transporter 2.7">
    <location>
        <begin position="1"/>
        <end position="493"/>
    </location>
</feature>
<feature type="transmembrane region" description="Helical" evidence="1">
    <location>
        <begin position="46"/>
        <end position="66"/>
    </location>
</feature>
<feature type="transmembrane region" description="Helical" evidence="1">
    <location>
        <begin position="70"/>
        <end position="90"/>
    </location>
</feature>
<feature type="transmembrane region" description="Helical" evidence="1">
    <location>
        <begin position="113"/>
        <end position="133"/>
    </location>
</feature>
<feature type="transmembrane region" description="Helical" evidence="1">
    <location>
        <begin position="136"/>
        <end position="156"/>
    </location>
</feature>
<feature type="transmembrane region" description="Helical" evidence="1">
    <location>
        <begin position="174"/>
        <end position="194"/>
    </location>
</feature>
<feature type="transmembrane region" description="Helical" evidence="1">
    <location>
        <begin position="202"/>
        <end position="222"/>
    </location>
</feature>
<feature type="transmembrane region" description="Helical" evidence="1">
    <location>
        <begin position="257"/>
        <end position="277"/>
    </location>
</feature>
<feature type="transmembrane region" description="Helical" evidence="1">
    <location>
        <begin position="299"/>
        <end position="319"/>
    </location>
</feature>
<feature type="transmembrane region" description="Helical" evidence="1">
    <location>
        <begin position="341"/>
        <end position="361"/>
    </location>
</feature>
<feature type="transmembrane region" description="Helical" evidence="1">
    <location>
        <begin position="368"/>
        <end position="388"/>
    </location>
</feature>
<feature type="transmembrane region" description="Helical" evidence="1">
    <location>
        <begin position="400"/>
        <end position="420"/>
    </location>
</feature>
<feature type="transmembrane region" description="Helical" evidence="1">
    <location>
        <begin position="431"/>
        <end position="451"/>
    </location>
</feature>
<feature type="region of interest" description="Disordered" evidence="2">
    <location>
        <begin position="1"/>
        <end position="20"/>
    </location>
</feature>
<feature type="compositionally biased region" description="Polar residues" evidence="2">
    <location>
        <begin position="1"/>
        <end position="19"/>
    </location>
</feature>
<protein>
    <recommendedName>
        <fullName>High affinity nitrate transporter 2.7</fullName>
        <shortName>AtNRT2:7</shortName>
    </recommendedName>
</protein>
<name>NRT27_ARATH</name>
<sequence>MEPSQRNTKPPSFSDSTIPVDSDGRATVFRPFSLSSPHSRAFHLAWLSLFSCFFSTFSIPPLVPVISSDLNLSASTVSAAGIASFAGSIFSRLAMGPLCDLIGPRTSSAILSFLTAPVILSASLVSSPTSFILVRFFVGFSLANFVANQYWMSSMFSGNVIGLANGVSAGWANVGAGISQLLMPLIYSTIAEFLPRAVAWRVSFVFPAIFQVTTAVLVLLYGQDTPHGNRKNSNQNKLTIPEEEEVLVVEEDERSSFVEILIGGLGNYRAWILALLYGYSYGVELTTDNVIAGYFYERFGVNLEAAGTIAASFGISNIASRPAGGMISDALGKRFGMRGRLWGLWIVQSVAGLLCVLLGRVNSLWGSILVMWVFSVFVQAASGLVFGVVPFVSTRSLGVVAGITGSGGTVGAVVTQFLLFSGDDVRKQRSISLMGLMTFVFALSVTSIYFPQWGGMCCGPSSSSEEEDISRGLLVEDEDEEGKVVSGSLRPVC</sequence>